<keyword id="KW-0028">Amino-acid biosynthesis</keyword>
<keyword id="KW-0963">Cytoplasm</keyword>
<keyword id="KW-0368">Histidine biosynthesis</keyword>
<gene>
    <name evidence="1" type="primary">hisZ</name>
    <name type="ordered locus">DET0846</name>
</gene>
<sequence length="412" mass="45954">MIARCKGCSDLLPEDMLRFRYIESIFHDSCITWGYEEVRTPMLEYLSLFTSSGTLTPQMLKRVYSFLDWDGWSGERVVLRPDGTIPAARLYIDNLQEMEVARLCYTSNIFRFDETGKKSRENWQLGAEIIGVTGSEANAELITLALETLSRLGFEDVELRLSHSQLIKAVLAQLEPNADEQHKIFDQLLDGDVALMSRLEAEKPELFRTLKLLMENKGTSAAFLKNVMAMAGAAGGDLEEPLNDFIAGVDVLDKLGVSYQIDLASGKGFEYYTGVIFHLFVNGEHVGGGGRYDKLIPLLGGPDKPAAGFALYLNRLIPMIDAEDMYDMVEEKILIKYEGDNLKNAYEMANLIRECGISAELFYPGVDTAAYGWAVTVKAADSYEVTDLIEDKTTEFKNQAEVICLLSGEEDA</sequence>
<dbReference type="EMBL" id="CP000027">
    <property type="protein sequence ID" value="AAW39896.1"/>
    <property type="molecule type" value="Genomic_DNA"/>
</dbReference>
<dbReference type="RefSeq" id="WP_010936574.1">
    <property type="nucleotide sequence ID" value="NC_002936.3"/>
</dbReference>
<dbReference type="SMR" id="Q3Z876"/>
<dbReference type="STRING" id="243164.DET0846"/>
<dbReference type="GeneID" id="3229858"/>
<dbReference type="KEGG" id="det:DET0846"/>
<dbReference type="PATRIC" id="fig|243164.10.peg.804"/>
<dbReference type="eggNOG" id="COG0124">
    <property type="taxonomic scope" value="Bacteria"/>
</dbReference>
<dbReference type="HOGENOM" id="CLU_025113_3_0_0"/>
<dbReference type="InParanoid" id="Q3Z876"/>
<dbReference type="UniPathway" id="UPA00031">
    <property type="reaction ID" value="UER00006"/>
</dbReference>
<dbReference type="Proteomes" id="UP000008289">
    <property type="component" value="Chromosome"/>
</dbReference>
<dbReference type="GO" id="GO:0005737">
    <property type="term" value="C:cytoplasm"/>
    <property type="evidence" value="ECO:0007669"/>
    <property type="project" value="UniProtKB-SubCell"/>
</dbReference>
<dbReference type="GO" id="GO:0004821">
    <property type="term" value="F:histidine-tRNA ligase activity"/>
    <property type="evidence" value="ECO:0007669"/>
    <property type="project" value="TreeGrafter"/>
</dbReference>
<dbReference type="GO" id="GO:0006427">
    <property type="term" value="P:histidyl-tRNA aminoacylation"/>
    <property type="evidence" value="ECO:0007669"/>
    <property type="project" value="TreeGrafter"/>
</dbReference>
<dbReference type="GO" id="GO:0000105">
    <property type="term" value="P:L-histidine biosynthetic process"/>
    <property type="evidence" value="ECO:0007669"/>
    <property type="project" value="UniProtKB-UniRule"/>
</dbReference>
<dbReference type="CDD" id="cd00773">
    <property type="entry name" value="HisRS-like_core"/>
    <property type="match status" value="1"/>
</dbReference>
<dbReference type="Gene3D" id="3.30.930.10">
    <property type="entry name" value="Bira Bifunctional Protein, Domain 2"/>
    <property type="match status" value="1"/>
</dbReference>
<dbReference type="HAMAP" id="MF_00125">
    <property type="entry name" value="HisZ"/>
    <property type="match status" value="1"/>
</dbReference>
<dbReference type="InterPro" id="IPR006195">
    <property type="entry name" value="aa-tRNA-synth_II"/>
</dbReference>
<dbReference type="InterPro" id="IPR045864">
    <property type="entry name" value="aa-tRNA-synth_II/BPL/LPL"/>
</dbReference>
<dbReference type="InterPro" id="IPR041715">
    <property type="entry name" value="HisRS-like_core"/>
</dbReference>
<dbReference type="InterPro" id="IPR004516">
    <property type="entry name" value="HisRS/HisZ"/>
</dbReference>
<dbReference type="InterPro" id="IPR004517">
    <property type="entry name" value="HisZ"/>
</dbReference>
<dbReference type="PANTHER" id="PTHR43707:SF1">
    <property type="entry name" value="HISTIDINE--TRNA LIGASE, MITOCHONDRIAL-RELATED"/>
    <property type="match status" value="1"/>
</dbReference>
<dbReference type="PANTHER" id="PTHR43707">
    <property type="entry name" value="HISTIDYL-TRNA SYNTHETASE"/>
    <property type="match status" value="1"/>
</dbReference>
<dbReference type="Pfam" id="PF13393">
    <property type="entry name" value="tRNA-synt_His"/>
    <property type="match status" value="1"/>
</dbReference>
<dbReference type="PIRSF" id="PIRSF001549">
    <property type="entry name" value="His-tRNA_synth"/>
    <property type="match status" value="1"/>
</dbReference>
<dbReference type="SUPFAM" id="SSF55681">
    <property type="entry name" value="Class II aaRS and biotin synthetases"/>
    <property type="match status" value="1"/>
</dbReference>
<dbReference type="PROSITE" id="PS50862">
    <property type="entry name" value="AA_TRNA_LIGASE_II"/>
    <property type="match status" value="1"/>
</dbReference>
<feature type="chain" id="PRO_0000242833" description="ATP phosphoribosyltransferase regulatory subunit">
    <location>
        <begin position="1"/>
        <end position="412"/>
    </location>
</feature>
<reference key="1">
    <citation type="journal article" date="2005" name="Science">
        <title>Genome sequence of the PCE-dechlorinating bacterium Dehalococcoides ethenogenes.</title>
        <authorList>
            <person name="Seshadri R."/>
            <person name="Adrian L."/>
            <person name="Fouts D.E."/>
            <person name="Eisen J.A."/>
            <person name="Phillippy A.M."/>
            <person name="Methe B.A."/>
            <person name="Ward N.L."/>
            <person name="Nelson W.C."/>
            <person name="DeBoy R.T."/>
            <person name="Khouri H.M."/>
            <person name="Kolonay J.F."/>
            <person name="Dodson R.J."/>
            <person name="Daugherty S.C."/>
            <person name="Brinkac L.M."/>
            <person name="Sullivan S.A."/>
            <person name="Madupu R."/>
            <person name="Nelson K.E."/>
            <person name="Kang K.H."/>
            <person name="Impraim M."/>
            <person name="Tran K."/>
            <person name="Robinson J.M."/>
            <person name="Forberger H.A."/>
            <person name="Fraser C.M."/>
            <person name="Zinder S.H."/>
            <person name="Heidelberg J.F."/>
        </authorList>
    </citation>
    <scope>NUCLEOTIDE SEQUENCE [LARGE SCALE GENOMIC DNA]</scope>
    <source>
        <strain>ATCC BAA-2266 / KCTC 15142 / 195</strain>
    </source>
</reference>
<evidence type="ECO:0000255" key="1">
    <source>
        <dbReference type="HAMAP-Rule" id="MF_00125"/>
    </source>
</evidence>
<name>HISZ_DEHM1</name>
<protein>
    <recommendedName>
        <fullName evidence="1">ATP phosphoribosyltransferase regulatory subunit</fullName>
    </recommendedName>
</protein>
<comment type="function">
    <text evidence="1">Required for the first step of histidine biosynthesis. May allow the feedback regulation of ATP phosphoribosyltransferase activity by histidine.</text>
</comment>
<comment type="pathway">
    <text evidence="1">Amino-acid biosynthesis; L-histidine biosynthesis; L-histidine from 5-phospho-alpha-D-ribose 1-diphosphate: step 1/9.</text>
</comment>
<comment type="subunit">
    <text evidence="1">Heteromultimer composed of HisG and HisZ subunits.</text>
</comment>
<comment type="subcellular location">
    <subcellularLocation>
        <location evidence="1">Cytoplasm</location>
    </subcellularLocation>
</comment>
<comment type="miscellaneous">
    <text>This function is generally fulfilled by the C-terminal part of HisG, which is missing in some bacteria such as this one.</text>
</comment>
<comment type="similarity">
    <text evidence="1">Belongs to the class-II aminoacyl-tRNA synthetase family. HisZ subfamily.</text>
</comment>
<organism>
    <name type="scientific">Dehalococcoides mccartyi (strain ATCC BAA-2266 / KCTC 15142 / 195)</name>
    <name type="common">Dehalococcoides ethenogenes (strain 195)</name>
    <dbReference type="NCBI Taxonomy" id="243164"/>
    <lineage>
        <taxon>Bacteria</taxon>
        <taxon>Bacillati</taxon>
        <taxon>Chloroflexota</taxon>
        <taxon>Dehalococcoidia</taxon>
        <taxon>Dehalococcoidales</taxon>
        <taxon>Dehalococcoidaceae</taxon>
        <taxon>Dehalococcoides</taxon>
    </lineage>
</organism>
<accession>Q3Z876</accession>
<proteinExistence type="inferred from homology"/>